<keyword id="KW-0067">ATP-binding</keyword>
<keyword id="KW-0342">GTP-binding</keyword>
<keyword id="KW-0547">Nucleotide-binding</keyword>
<keyword id="KW-1185">Reference proteome</keyword>
<reference key="1">
    <citation type="journal article" date="2010" name="ISME J.">
        <title>The complete genome sequence of the algal symbiont Dinoroseobacter shibae: a hitchhiker's guide to life in the sea.</title>
        <authorList>
            <person name="Wagner-Dobler I."/>
            <person name="Ballhausen B."/>
            <person name="Berger M."/>
            <person name="Brinkhoff T."/>
            <person name="Buchholz I."/>
            <person name="Bunk B."/>
            <person name="Cypionka H."/>
            <person name="Daniel R."/>
            <person name="Drepper T."/>
            <person name="Gerdts G."/>
            <person name="Hahnke S."/>
            <person name="Han C."/>
            <person name="Jahn D."/>
            <person name="Kalhoefer D."/>
            <person name="Kiss H."/>
            <person name="Klenk H.P."/>
            <person name="Kyrpides N."/>
            <person name="Liebl W."/>
            <person name="Liesegang H."/>
            <person name="Meincke L."/>
            <person name="Pati A."/>
            <person name="Petersen J."/>
            <person name="Piekarski T."/>
            <person name="Pommerenke C."/>
            <person name="Pradella S."/>
            <person name="Pukall R."/>
            <person name="Rabus R."/>
            <person name="Stackebrandt E."/>
            <person name="Thole S."/>
            <person name="Thompson L."/>
            <person name="Tielen P."/>
            <person name="Tomasch J."/>
            <person name="von Jan M."/>
            <person name="Wanphrut N."/>
            <person name="Wichels A."/>
            <person name="Zech H."/>
            <person name="Simon M."/>
        </authorList>
    </citation>
    <scope>NUCLEOTIDE SEQUENCE [LARGE SCALE GENOMIC DNA]</scope>
    <source>
        <strain>DSM 16493 / NCIMB 14021 / DFL 12</strain>
    </source>
</reference>
<organism>
    <name type="scientific">Dinoroseobacter shibae (strain DSM 16493 / NCIMB 14021 / DFL 12)</name>
    <dbReference type="NCBI Taxonomy" id="398580"/>
    <lineage>
        <taxon>Bacteria</taxon>
        <taxon>Pseudomonadati</taxon>
        <taxon>Pseudomonadota</taxon>
        <taxon>Alphaproteobacteria</taxon>
        <taxon>Rhodobacterales</taxon>
        <taxon>Roseobacteraceae</taxon>
        <taxon>Dinoroseobacter</taxon>
    </lineage>
</organism>
<accession>A8LLE8</accession>
<sequence length="300" mass="33348">MTDTAPTPEKMPQKIVLVTGPSGAGRTTAIRALEDLGFEAIDNMPISLVPRLLDGPPLARPLALGLDARTRDFSVTAVADLLHLLAEDPRADAQLLFLDASPRVLTRRFSETRRRHPLAPLESPMDGIARETDLLAPIRARADVVIDTSELSPHDLRAEMLRWFGDRDSLRLAITVQSFSYKRGVPQGTDMVFDVRFLRNPYWEDTLRRLDGRDARVQDYVSADPRFDSFFDNIASLVRLLLPAYREEGKSHLSIGFGCTGGQHRSVTVAEKLSAALVAEGWQVSNRHLELSRRSIGAQS</sequence>
<dbReference type="EMBL" id="CP000830">
    <property type="protein sequence ID" value="ABV91958.1"/>
    <property type="molecule type" value="Genomic_DNA"/>
</dbReference>
<dbReference type="RefSeq" id="WP_012176891.1">
    <property type="nucleotide sequence ID" value="NC_009952.1"/>
</dbReference>
<dbReference type="SMR" id="A8LLE8"/>
<dbReference type="STRING" id="398580.Dshi_0209"/>
<dbReference type="KEGG" id="dsh:Dshi_0209"/>
<dbReference type="eggNOG" id="COG1660">
    <property type="taxonomic scope" value="Bacteria"/>
</dbReference>
<dbReference type="HOGENOM" id="CLU_059558_0_0_5"/>
<dbReference type="OrthoDB" id="9784461at2"/>
<dbReference type="Proteomes" id="UP000006833">
    <property type="component" value="Chromosome"/>
</dbReference>
<dbReference type="GO" id="GO:0005524">
    <property type="term" value="F:ATP binding"/>
    <property type="evidence" value="ECO:0007669"/>
    <property type="project" value="UniProtKB-UniRule"/>
</dbReference>
<dbReference type="GO" id="GO:0005525">
    <property type="term" value="F:GTP binding"/>
    <property type="evidence" value="ECO:0007669"/>
    <property type="project" value="UniProtKB-UniRule"/>
</dbReference>
<dbReference type="Gene3D" id="3.40.50.300">
    <property type="entry name" value="P-loop containing nucleotide triphosphate hydrolases"/>
    <property type="match status" value="1"/>
</dbReference>
<dbReference type="HAMAP" id="MF_00636">
    <property type="entry name" value="RapZ_like"/>
    <property type="match status" value="1"/>
</dbReference>
<dbReference type="InterPro" id="IPR027417">
    <property type="entry name" value="P-loop_NTPase"/>
</dbReference>
<dbReference type="InterPro" id="IPR005337">
    <property type="entry name" value="RapZ-like"/>
</dbReference>
<dbReference type="InterPro" id="IPR053930">
    <property type="entry name" value="RapZ-like_N"/>
</dbReference>
<dbReference type="InterPro" id="IPR053931">
    <property type="entry name" value="RapZ_C"/>
</dbReference>
<dbReference type="NCBIfam" id="NF003828">
    <property type="entry name" value="PRK05416.1"/>
    <property type="match status" value="1"/>
</dbReference>
<dbReference type="PANTHER" id="PTHR30448">
    <property type="entry name" value="RNASE ADAPTER PROTEIN RAPZ"/>
    <property type="match status" value="1"/>
</dbReference>
<dbReference type="PANTHER" id="PTHR30448:SF0">
    <property type="entry name" value="RNASE ADAPTER PROTEIN RAPZ"/>
    <property type="match status" value="1"/>
</dbReference>
<dbReference type="Pfam" id="PF22740">
    <property type="entry name" value="PapZ_C"/>
    <property type="match status" value="1"/>
</dbReference>
<dbReference type="Pfam" id="PF03668">
    <property type="entry name" value="RapZ-like_N"/>
    <property type="match status" value="1"/>
</dbReference>
<dbReference type="PIRSF" id="PIRSF005052">
    <property type="entry name" value="P-loopkin"/>
    <property type="match status" value="1"/>
</dbReference>
<dbReference type="SUPFAM" id="SSF52540">
    <property type="entry name" value="P-loop containing nucleoside triphosphate hydrolases"/>
    <property type="match status" value="1"/>
</dbReference>
<gene>
    <name type="ordered locus">Dshi_0209</name>
</gene>
<evidence type="ECO:0000255" key="1">
    <source>
        <dbReference type="HAMAP-Rule" id="MF_00636"/>
    </source>
</evidence>
<proteinExistence type="inferred from homology"/>
<name>Y209_DINSH</name>
<protein>
    <recommendedName>
        <fullName evidence="1">Nucleotide-binding protein Dshi_0209</fullName>
    </recommendedName>
</protein>
<comment type="function">
    <text evidence="1">Displays ATPase and GTPase activities.</text>
</comment>
<comment type="similarity">
    <text evidence="1">Belongs to the RapZ-like family.</text>
</comment>
<feature type="chain" id="PRO_0000383243" description="Nucleotide-binding protein Dshi_0209">
    <location>
        <begin position="1"/>
        <end position="300"/>
    </location>
</feature>
<feature type="binding site" evidence="1">
    <location>
        <begin position="20"/>
        <end position="27"/>
    </location>
    <ligand>
        <name>ATP</name>
        <dbReference type="ChEBI" id="CHEBI:30616"/>
    </ligand>
</feature>
<feature type="binding site" evidence="1">
    <location>
        <begin position="67"/>
        <end position="70"/>
    </location>
    <ligand>
        <name>GTP</name>
        <dbReference type="ChEBI" id="CHEBI:37565"/>
    </ligand>
</feature>